<evidence type="ECO:0000250" key="1"/>
<evidence type="ECO:0000255" key="2"/>
<evidence type="ECO:0000305" key="3"/>
<organism>
    <name type="scientific">Aspergillus fumigatus (strain ATCC MYA-4609 / CBS 101355 / FGSC A1100 / Af293)</name>
    <name type="common">Neosartorya fumigata</name>
    <dbReference type="NCBI Taxonomy" id="330879"/>
    <lineage>
        <taxon>Eukaryota</taxon>
        <taxon>Fungi</taxon>
        <taxon>Dikarya</taxon>
        <taxon>Ascomycota</taxon>
        <taxon>Pezizomycotina</taxon>
        <taxon>Eurotiomycetes</taxon>
        <taxon>Eurotiomycetidae</taxon>
        <taxon>Eurotiales</taxon>
        <taxon>Aspergillaceae</taxon>
        <taxon>Aspergillus</taxon>
        <taxon>Aspergillus subgen. Fumigati</taxon>
    </lineage>
</organism>
<comment type="function">
    <text evidence="1">Mannosyltransferase involved in glycosylphosphatidylinositol-anchor biosynthesis. Transfers the first alpha-1,4-mannose to GlcN-acyl-PI during GPI precursor assembly. Required for cell wall integrity (By similarity).</text>
</comment>
<comment type="pathway">
    <text>Glycolipid biosynthesis; glycosylphosphatidylinositol-anchor biosynthesis.</text>
</comment>
<comment type="subcellular location">
    <subcellularLocation>
        <location evidence="1">Endoplasmic reticulum membrane</location>
        <topology evidence="1">Multi-pass membrane protein</topology>
    </subcellularLocation>
</comment>
<comment type="similarity">
    <text evidence="3">Belongs to the PIGM family.</text>
</comment>
<proteinExistence type="inferred from homology"/>
<accession>Q4WAH2</accession>
<feature type="chain" id="PRO_0000246224" description="GPI mannosyltransferase 1">
    <location>
        <begin position="1"/>
        <end position="425"/>
    </location>
</feature>
<feature type="transmembrane region" description="Helical" evidence="2">
    <location>
        <begin position="11"/>
        <end position="31"/>
    </location>
</feature>
<feature type="transmembrane region" description="Helical" evidence="2">
    <location>
        <begin position="85"/>
        <end position="105"/>
    </location>
</feature>
<feature type="transmembrane region" description="Helical" evidence="2">
    <location>
        <begin position="144"/>
        <end position="164"/>
    </location>
</feature>
<feature type="transmembrane region" description="Helical" evidence="2">
    <location>
        <begin position="166"/>
        <end position="186"/>
    </location>
</feature>
<feature type="transmembrane region" description="Helical" evidence="2">
    <location>
        <begin position="233"/>
        <end position="253"/>
    </location>
</feature>
<feature type="transmembrane region" description="Helical" evidence="2">
    <location>
        <begin position="295"/>
        <end position="315"/>
    </location>
</feature>
<feature type="transmembrane region" description="Helical" evidence="2">
    <location>
        <begin position="340"/>
        <end position="360"/>
    </location>
</feature>
<feature type="transmembrane region" description="Helical" evidence="2">
    <location>
        <begin position="367"/>
        <end position="387"/>
    </location>
</feature>
<feature type="transmembrane region" description="Helical" evidence="2">
    <location>
        <begin position="398"/>
        <end position="418"/>
    </location>
</feature>
<name>GPI14_ASPFU</name>
<sequence length="425" mass="46650">MTSFFDSPSKVIGASIALRAVLLVYGAWQDAHSPIKYTDIDYFVFTDAARYVSRGASPYARDTYRYTPLLAWLLLPTTWDSIPGFFAFGKALFALADVVAGWLIAKVLVSAYGMSPSRALKYASVWLLNPMVANISTRGSSEGLLGVLVVGLLWAVLSRRVSLAGVILGLGVHFKIYPFIYGPAVVWWFDAERDGSGSPRGTATARAAREKDDGQDGQGILSKAVDFLTPARIHLTLVALATFSALNVSMYILYDLPFAQNTYLHHLTRIDHRHNFSPYSTLLYLSAAGGARTAFESLAFIPQLLLSVVVIPLVLGKKSLAGTMLAQTFAFVTFNKVCTSQYFLWYLIFLPFYLPSSSLMKNPRKGILVGLLWVIAQALWLQQGYNLEFLGLSSFVPGLFLASLFFFAVNVWILGIIVEDVGGSA</sequence>
<gene>
    <name type="primary">gpi14</name>
    <name type="ORF">AFUA_7G01300</name>
</gene>
<keyword id="KW-0961">Cell wall biogenesis/degradation</keyword>
<keyword id="KW-0256">Endoplasmic reticulum</keyword>
<keyword id="KW-0328">Glycosyltransferase</keyword>
<keyword id="KW-0337">GPI-anchor biosynthesis</keyword>
<keyword id="KW-0472">Membrane</keyword>
<keyword id="KW-1185">Reference proteome</keyword>
<keyword id="KW-0808">Transferase</keyword>
<keyword id="KW-0812">Transmembrane</keyword>
<keyword id="KW-1133">Transmembrane helix</keyword>
<dbReference type="EC" id="2.4.1.-"/>
<dbReference type="EMBL" id="AAHF01000015">
    <property type="protein sequence ID" value="EAL84764.1"/>
    <property type="molecule type" value="Genomic_DNA"/>
</dbReference>
<dbReference type="RefSeq" id="XP_746802.1">
    <property type="nucleotide sequence ID" value="XM_741709.1"/>
</dbReference>
<dbReference type="FunCoup" id="Q4WAH2">
    <property type="interactions" value="594"/>
</dbReference>
<dbReference type="STRING" id="330879.Q4WAH2"/>
<dbReference type="EnsemblFungi" id="EAL84764">
    <property type="protein sequence ID" value="EAL84764"/>
    <property type="gene ID" value="AFUA_7G01300"/>
</dbReference>
<dbReference type="GeneID" id="3504171"/>
<dbReference type="KEGG" id="afm:AFUA_7G01300"/>
<dbReference type="eggNOG" id="KOG3893">
    <property type="taxonomic scope" value="Eukaryota"/>
</dbReference>
<dbReference type="HOGENOM" id="CLU_024220_1_0_1"/>
<dbReference type="InParanoid" id="Q4WAH2"/>
<dbReference type="OMA" id="MLWFIGQ"/>
<dbReference type="OrthoDB" id="1741594at2759"/>
<dbReference type="UniPathway" id="UPA00196"/>
<dbReference type="Proteomes" id="UP000002530">
    <property type="component" value="Chromosome 7"/>
</dbReference>
<dbReference type="GO" id="GO:0005789">
    <property type="term" value="C:endoplasmic reticulum membrane"/>
    <property type="evidence" value="ECO:0007669"/>
    <property type="project" value="UniProtKB-SubCell"/>
</dbReference>
<dbReference type="GO" id="GO:1990529">
    <property type="term" value="C:glycosylphosphatidylinositol-mannosyltransferase I complex"/>
    <property type="evidence" value="ECO:0000318"/>
    <property type="project" value="GO_Central"/>
</dbReference>
<dbReference type="GO" id="GO:0051751">
    <property type="term" value="F:alpha-1,4-mannosyltransferase activity"/>
    <property type="evidence" value="ECO:0007669"/>
    <property type="project" value="InterPro"/>
</dbReference>
<dbReference type="GO" id="GO:0004376">
    <property type="term" value="F:glycolipid mannosyltransferase activity"/>
    <property type="evidence" value="ECO:0007669"/>
    <property type="project" value="InterPro"/>
</dbReference>
<dbReference type="GO" id="GO:0000030">
    <property type="term" value="F:mannosyltransferase activity"/>
    <property type="evidence" value="ECO:0000318"/>
    <property type="project" value="GO_Central"/>
</dbReference>
<dbReference type="GO" id="GO:0071555">
    <property type="term" value="P:cell wall organization"/>
    <property type="evidence" value="ECO:0007669"/>
    <property type="project" value="UniProtKB-KW"/>
</dbReference>
<dbReference type="GO" id="GO:0006506">
    <property type="term" value="P:GPI anchor biosynthetic process"/>
    <property type="evidence" value="ECO:0000318"/>
    <property type="project" value="GO_Central"/>
</dbReference>
<dbReference type="InterPro" id="IPR007704">
    <property type="entry name" value="PIG-M"/>
</dbReference>
<dbReference type="PANTHER" id="PTHR12886:SF0">
    <property type="entry name" value="GPI MANNOSYLTRANSFERASE 1"/>
    <property type="match status" value="1"/>
</dbReference>
<dbReference type="PANTHER" id="PTHR12886">
    <property type="entry name" value="PIG-M MANNOSYLTRANSFERASE"/>
    <property type="match status" value="1"/>
</dbReference>
<dbReference type="Pfam" id="PF05007">
    <property type="entry name" value="Mannosyl_trans"/>
    <property type="match status" value="1"/>
</dbReference>
<reference key="1">
    <citation type="journal article" date="2005" name="Nature">
        <title>Genomic sequence of the pathogenic and allergenic filamentous fungus Aspergillus fumigatus.</title>
        <authorList>
            <person name="Nierman W.C."/>
            <person name="Pain A."/>
            <person name="Anderson M.J."/>
            <person name="Wortman J.R."/>
            <person name="Kim H.S."/>
            <person name="Arroyo J."/>
            <person name="Berriman M."/>
            <person name="Abe K."/>
            <person name="Archer D.B."/>
            <person name="Bermejo C."/>
            <person name="Bennett J.W."/>
            <person name="Bowyer P."/>
            <person name="Chen D."/>
            <person name="Collins M."/>
            <person name="Coulsen R."/>
            <person name="Davies R."/>
            <person name="Dyer P.S."/>
            <person name="Farman M.L."/>
            <person name="Fedorova N."/>
            <person name="Fedorova N.D."/>
            <person name="Feldblyum T.V."/>
            <person name="Fischer R."/>
            <person name="Fosker N."/>
            <person name="Fraser A."/>
            <person name="Garcia J.L."/>
            <person name="Garcia M.J."/>
            <person name="Goble A."/>
            <person name="Goldman G.H."/>
            <person name="Gomi K."/>
            <person name="Griffith-Jones S."/>
            <person name="Gwilliam R."/>
            <person name="Haas B.J."/>
            <person name="Haas H."/>
            <person name="Harris D.E."/>
            <person name="Horiuchi H."/>
            <person name="Huang J."/>
            <person name="Humphray S."/>
            <person name="Jimenez J."/>
            <person name="Keller N."/>
            <person name="Khouri H."/>
            <person name="Kitamoto K."/>
            <person name="Kobayashi T."/>
            <person name="Konzack S."/>
            <person name="Kulkarni R."/>
            <person name="Kumagai T."/>
            <person name="Lafton A."/>
            <person name="Latge J.-P."/>
            <person name="Li W."/>
            <person name="Lord A."/>
            <person name="Lu C."/>
            <person name="Majoros W.H."/>
            <person name="May G.S."/>
            <person name="Miller B.L."/>
            <person name="Mohamoud Y."/>
            <person name="Molina M."/>
            <person name="Monod M."/>
            <person name="Mouyna I."/>
            <person name="Mulligan S."/>
            <person name="Murphy L.D."/>
            <person name="O'Neil S."/>
            <person name="Paulsen I."/>
            <person name="Penalva M.A."/>
            <person name="Pertea M."/>
            <person name="Price C."/>
            <person name="Pritchard B.L."/>
            <person name="Quail M.A."/>
            <person name="Rabbinowitsch E."/>
            <person name="Rawlins N."/>
            <person name="Rajandream M.A."/>
            <person name="Reichard U."/>
            <person name="Renauld H."/>
            <person name="Robson G.D."/>
            <person name="Rodriguez de Cordoba S."/>
            <person name="Rodriguez-Pena J.M."/>
            <person name="Ronning C.M."/>
            <person name="Rutter S."/>
            <person name="Salzberg S.L."/>
            <person name="Sanchez M."/>
            <person name="Sanchez-Ferrero J.C."/>
            <person name="Saunders D."/>
            <person name="Seeger K."/>
            <person name="Squares R."/>
            <person name="Squares S."/>
            <person name="Takeuchi M."/>
            <person name="Tekaia F."/>
            <person name="Turner G."/>
            <person name="Vazquez de Aldana C.R."/>
            <person name="Weidman J."/>
            <person name="White O."/>
            <person name="Woodward J.R."/>
            <person name="Yu J.-H."/>
            <person name="Fraser C.M."/>
            <person name="Galagan J.E."/>
            <person name="Asai K."/>
            <person name="Machida M."/>
            <person name="Hall N."/>
            <person name="Barrell B.G."/>
            <person name="Denning D.W."/>
        </authorList>
    </citation>
    <scope>NUCLEOTIDE SEQUENCE [LARGE SCALE GENOMIC DNA]</scope>
    <source>
        <strain>ATCC MYA-4609 / CBS 101355 / FGSC A1100 / Af293</strain>
    </source>
</reference>
<protein>
    <recommendedName>
        <fullName>GPI mannosyltransferase 1</fullName>
        <ecNumber>2.4.1.-</ecNumber>
    </recommendedName>
    <alternativeName>
        <fullName>GPI mannosyltransferase I</fullName>
        <shortName>GPI-MT-I</shortName>
    </alternativeName>
    <alternativeName>
        <fullName>Glycosylphosphatidylinositol-anchor biosynthesis protein 14</fullName>
    </alternativeName>
</protein>